<accession>Q65CN1</accession>
<accession>Q62N60</accession>
<reference key="1">
    <citation type="journal article" date="2004" name="J. Mol. Microbiol. Biotechnol.">
        <title>The complete genome sequence of Bacillus licheniformis DSM13, an organism with great industrial potential.</title>
        <authorList>
            <person name="Veith B."/>
            <person name="Herzberg C."/>
            <person name="Steckel S."/>
            <person name="Feesche J."/>
            <person name="Maurer K.H."/>
            <person name="Ehrenreich P."/>
            <person name="Baeumer S."/>
            <person name="Henne A."/>
            <person name="Liesegang H."/>
            <person name="Merkl R."/>
            <person name="Ehrenreich A."/>
            <person name="Gottschalk G."/>
        </authorList>
    </citation>
    <scope>NUCLEOTIDE SEQUENCE [LARGE SCALE GENOMIC DNA]</scope>
    <source>
        <strain>ATCC 14580 / DSM 13 / JCM 2505 / CCUG 7422 / NBRC 12200 / NCIMB 9375 / NCTC 10341 / NRRL NRS-1264 / Gibson 46</strain>
    </source>
</reference>
<reference key="2">
    <citation type="journal article" date="2004" name="Genome Biol.">
        <title>Complete genome sequence of the industrial bacterium Bacillus licheniformis and comparisons with closely related Bacillus species.</title>
        <authorList>
            <person name="Rey M.W."/>
            <person name="Ramaiya P."/>
            <person name="Nelson B.A."/>
            <person name="Brody-Karpin S.D."/>
            <person name="Zaretsky E.J."/>
            <person name="Tang M."/>
            <person name="Lopez de Leon A."/>
            <person name="Xiang H."/>
            <person name="Gusti V."/>
            <person name="Clausen I.G."/>
            <person name="Olsen P.B."/>
            <person name="Rasmussen M.D."/>
            <person name="Andersen J.T."/>
            <person name="Joergensen P.L."/>
            <person name="Larsen T.S."/>
            <person name="Sorokin A."/>
            <person name="Bolotin A."/>
            <person name="Lapidus A."/>
            <person name="Galleron N."/>
            <person name="Ehrlich S.D."/>
            <person name="Berka R.M."/>
        </authorList>
    </citation>
    <scope>NUCLEOTIDE SEQUENCE [LARGE SCALE GENOMIC DNA]</scope>
    <source>
        <strain>ATCC 14580 / DSM 13 / JCM 2505 / CCUG 7422 / NBRC 12200 / NCIMB 9375 / NCTC 10341 / NRRL NRS-1264 / Gibson 46</strain>
    </source>
</reference>
<sequence length="459" mass="50885">MDTIAAISTPMGEGAIAIVRMSGPEALAIADKVYKGPRGKRLSSVDSHTINYGHIVDPETEKVVEEVMVSVLKAPKTFTREDIVEINCHGGLVTVNQVLQLVLREGARLAEPGEFTKRAFLNGRIDLSQAEAVMDLIRAKTDRAMNVAMNQMEGRLSSLIKRLRAEILETLAHVEVNIDYPEYDDVEEMTHKMLIEKATKVKKEIEALLTTSEQGKILREGISTVIIGRPNVGKSSLLNSLVHETKAIVTDIPGTTRDVIEEYVNVRGVPLRLVDTAGIRETEDIVERIGVERSRQVLKEADLILLVLNYSESLSDEDIKLFEATKGMDIIVIVNKTDLEQKLDLDRVRELAGNQPVVTTSLLKEEGIDELEEAIQSLFFTGAIESGDLTYVSNTRHISLLHEAKRAITDALEGIENDVPIDMVQIDLTRCWEVLGEIIGDAVHESLIDQLFSQFCLGK</sequence>
<feature type="chain" id="PRO_0000345712" description="tRNA modification GTPase MnmE">
    <location>
        <begin position="1"/>
        <end position="459"/>
    </location>
</feature>
<feature type="domain" description="TrmE-type G">
    <location>
        <begin position="221"/>
        <end position="380"/>
    </location>
</feature>
<feature type="binding site" evidence="1">
    <location>
        <position position="20"/>
    </location>
    <ligand>
        <name>(6S)-5-formyl-5,6,7,8-tetrahydrofolate</name>
        <dbReference type="ChEBI" id="CHEBI:57457"/>
    </ligand>
</feature>
<feature type="binding site" evidence="1">
    <location>
        <position position="85"/>
    </location>
    <ligand>
        <name>(6S)-5-formyl-5,6,7,8-tetrahydrofolate</name>
        <dbReference type="ChEBI" id="CHEBI:57457"/>
    </ligand>
</feature>
<feature type="binding site" evidence="1">
    <location>
        <position position="124"/>
    </location>
    <ligand>
        <name>(6S)-5-formyl-5,6,7,8-tetrahydrofolate</name>
        <dbReference type="ChEBI" id="CHEBI:57457"/>
    </ligand>
</feature>
<feature type="binding site" evidence="1">
    <location>
        <begin position="231"/>
        <end position="236"/>
    </location>
    <ligand>
        <name>GTP</name>
        <dbReference type="ChEBI" id="CHEBI:37565"/>
    </ligand>
</feature>
<feature type="binding site" evidence="1">
    <location>
        <position position="231"/>
    </location>
    <ligand>
        <name>K(+)</name>
        <dbReference type="ChEBI" id="CHEBI:29103"/>
    </ligand>
</feature>
<feature type="binding site" evidence="1">
    <location>
        <position position="235"/>
    </location>
    <ligand>
        <name>Mg(2+)</name>
        <dbReference type="ChEBI" id="CHEBI:18420"/>
    </ligand>
</feature>
<feature type="binding site" evidence="1">
    <location>
        <begin position="250"/>
        <end position="256"/>
    </location>
    <ligand>
        <name>GTP</name>
        <dbReference type="ChEBI" id="CHEBI:37565"/>
    </ligand>
</feature>
<feature type="binding site" evidence="1">
    <location>
        <position position="250"/>
    </location>
    <ligand>
        <name>K(+)</name>
        <dbReference type="ChEBI" id="CHEBI:29103"/>
    </ligand>
</feature>
<feature type="binding site" evidence="1">
    <location>
        <position position="252"/>
    </location>
    <ligand>
        <name>K(+)</name>
        <dbReference type="ChEBI" id="CHEBI:29103"/>
    </ligand>
</feature>
<feature type="binding site" evidence="1">
    <location>
        <position position="255"/>
    </location>
    <ligand>
        <name>K(+)</name>
        <dbReference type="ChEBI" id="CHEBI:29103"/>
    </ligand>
</feature>
<feature type="binding site" evidence="1">
    <location>
        <position position="256"/>
    </location>
    <ligand>
        <name>Mg(2+)</name>
        <dbReference type="ChEBI" id="CHEBI:18420"/>
    </ligand>
</feature>
<feature type="binding site" evidence="1">
    <location>
        <begin position="275"/>
        <end position="278"/>
    </location>
    <ligand>
        <name>GTP</name>
        <dbReference type="ChEBI" id="CHEBI:37565"/>
    </ligand>
</feature>
<feature type="binding site" evidence="1">
    <location>
        <position position="459"/>
    </location>
    <ligand>
        <name>(6S)-5-formyl-5,6,7,8-tetrahydrofolate</name>
        <dbReference type="ChEBI" id="CHEBI:57457"/>
    </ligand>
</feature>
<dbReference type="EC" id="3.6.-.-" evidence="1"/>
<dbReference type="EMBL" id="CP000002">
    <property type="protein sequence ID" value="AAU25801.1"/>
    <property type="molecule type" value="Genomic_DNA"/>
</dbReference>
<dbReference type="EMBL" id="AE017333">
    <property type="protein sequence ID" value="AAU43183.1"/>
    <property type="molecule type" value="Genomic_DNA"/>
</dbReference>
<dbReference type="RefSeq" id="WP_003178047.1">
    <property type="nucleotide sequence ID" value="NC_006322.1"/>
</dbReference>
<dbReference type="SMR" id="Q65CN1"/>
<dbReference type="STRING" id="279010.BL00110"/>
<dbReference type="GeneID" id="92859055"/>
<dbReference type="KEGG" id="bld:BLi04375"/>
<dbReference type="KEGG" id="bli:BL00110"/>
<dbReference type="eggNOG" id="COG0486">
    <property type="taxonomic scope" value="Bacteria"/>
</dbReference>
<dbReference type="HOGENOM" id="CLU_019624_4_1_9"/>
<dbReference type="Proteomes" id="UP000000606">
    <property type="component" value="Chromosome"/>
</dbReference>
<dbReference type="GO" id="GO:0005829">
    <property type="term" value="C:cytosol"/>
    <property type="evidence" value="ECO:0007669"/>
    <property type="project" value="TreeGrafter"/>
</dbReference>
<dbReference type="GO" id="GO:0005525">
    <property type="term" value="F:GTP binding"/>
    <property type="evidence" value="ECO:0007669"/>
    <property type="project" value="UniProtKB-UniRule"/>
</dbReference>
<dbReference type="GO" id="GO:0003924">
    <property type="term" value="F:GTPase activity"/>
    <property type="evidence" value="ECO:0007669"/>
    <property type="project" value="UniProtKB-UniRule"/>
</dbReference>
<dbReference type="GO" id="GO:0046872">
    <property type="term" value="F:metal ion binding"/>
    <property type="evidence" value="ECO:0007669"/>
    <property type="project" value="UniProtKB-KW"/>
</dbReference>
<dbReference type="GO" id="GO:0030488">
    <property type="term" value="P:tRNA methylation"/>
    <property type="evidence" value="ECO:0007669"/>
    <property type="project" value="TreeGrafter"/>
</dbReference>
<dbReference type="GO" id="GO:0002098">
    <property type="term" value="P:tRNA wobble uridine modification"/>
    <property type="evidence" value="ECO:0007669"/>
    <property type="project" value="TreeGrafter"/>
</dbReference>
<dbReference type="CDD" id="cd04164">
    <property type="entry name" value="trmE"/>
    <property type="match status" value="1"/>
</dbReference>
<dbReference type="CDD" id="cd14858">
    <property type="entry name" value="TrmE_N"/>
    <property type="match status" value="1"/>
</dbReference>
<dbReference type="FunFam" id="3.30.1360.120:FF:000003">
    <property type="entry name" value="tRNA modification GTPase MnmE"/>
    <property type="match status" value="1"/>
</dbReference>
<dbReference type="FunFam" id="3.40.50.300:FF:000494">
    <property type="entry name" value="tRNA modification GTPase MnmE"/>
    <property type="match status" value="1"/>
</dbReference>
<dbReference type="Gene3D" id="3.40.50.300">
    <property type="entry name" value="P-loop containing nucleotide triphosphate hydrolases"/>
    <property type="match status" value="1"/>
</dbReference>
<dbReference type="Gene3D" id="3.30.1360.120">
    <property type="entry name" value="Probable tRNA modification gtpase trme, domain 1"/>
    <property type="match status" value="1"/>
</dbReference>
<dbReference type="Gene3D" id="1.20.120.430">
    <property type="entry name" value="tRNA modification GTPase MnmE domain 2"/>
    <property type="match status" value="1"/>
</dbReference>
<dbReference type="HAMAP" id="MF_00379">
    <property type="entry name" value="GTPase_MnmE"/>
    <property type="match status" value="1"/>
</dbReference>
<dbReference type="InterPro" id="IPR031168">
    <property type="entry name" value="G_TrmE"/>
</dbReference>
<dbReference type="InterPro" id="IPR006073">
    <property type="entry name" value="GTP-bd"/>
</dbReference>
<dbReference type="InterPro" id="IPR018948">
    <property type="entry name" value="GTP-bd_TrmE_N"/>
</dbReference>
<dbReference type="InterPro" id="IPR004520">
    <property type="entry name" value="GTPase_MnmE"/>
</dbReference>
<dbReference type="InterPro" id="IPR027368">
    <property type="entry name" value="MnmE_dom2"/>
</dbReference>
<dbReference type="InterPro" id="IPR025867">
    <property type="entry name" value="MnmE_helical"/>
</dbReference>
<dbReference type="InterPro" id="IPR027417">
    <property type="entry name" value="P-loop_NTPase"/>
</dbReference>
<dbReference type="InterPro" id="IPR005225">
    <property type="entry name" value="Small_GTP-bd"/>
</dbReference>
<dbReference type="InterPro" id="IPR027266">
    <property type="entry name" value="TrmE/GcvT_dom1"/>
</dbReference>
<dbReference type="NCBIfam" id="TIGR00450">
    <property type="entry name" value="mnmE_trmE_thdF"/>
    <property type="match status" value="1"/>
</dbReference>
<dbReference type="NCBIfam" id="NF003661">
    <property type="entry name" value="PRK05291.1-3"/>
    <property type="match status" value="1"/>
</dbReference>
<dbReference type="NCBIfam" id="TIGR00231">
    <property type="entry name" value="small_GTP"/>
    <property type="match status" value="1"/>
</dbReference>
<dbReference type="PANTHER" id="PTHR42714">
    <property type="entry name" value="TRNA MODIFICATION GTPASE GTPBP3"/>
    <property type="match status" value="1"/>
</dbReference>
<dbReference type="PANTHER" id="PTHR42714:SF2">
    <property type="entry name" value="TRNA MODIFICATION GTPASE GTPBP3, MITOCHONDRIAL"/>
    <property type="match status" value="1"/>
</dbReference>
<dbReference type="Pfam" id="PF01926">
    <property type="entry name" value="MMR_HSR1"/>
    <property type="match status" value="1"/>
</dbReference>
<dbReference type="Pfam" id="PF12631">
    <property type="entry name" value="MnmE_helical"/>
    <property type="match status" value="1"/>
</dbReference>
<dbReference type="Pfam" id="PF10396">
    <property type="entry name" value="TrmE_N"/>
    <property type="match status" value="1"/>
</dbReference>
<dbReference type="PRINTS" id="PR00449">
    <property type="entry name" value="RASTRNSFRMNG"/>
</dbReference>
<dbReference type="SUPFAM" id="SSF52540">
    <property type="entry name" value="P-loop containing nucleoside triphosphate hydrolases"/>
    <property type="match status" value="1"/>
</dbReference>
<dbReference type="PROSITE" id="PS51709">
    <property type="entry name" value="G_TRME"/>
    <property type="match status" value="1"/>
</dbReference>
<evidence type="ECO:0000255" key="1">
    <source>
        <dbReference type="HAMAP-Rule" id="MF_00379"/>
    </source>
</evidence>
<name>MNME_BACLD</name>
<gene>
    <name evidence="1" type="primary">mnmE</name>
    <name evidence="1" type="synonym">trmE</name>
    <name type="ordered locus">BLi04375</name>
    <name type="ordered locus">BL00110</name>
</gene>
<proteinExistence type="inferred from homology"/>
<comment type="function">
    <text evidence="1">Exhibits a very high intrinsic GTPase hydrolysis rate. Involved in the addition of a carboxymethylaminomethyl (cmnm) group at the wobble position (U34) of certain tRNAs, forming tRNA-cmnm(5)s(2)U34.</text>
</comment>
<comment type="cofactor">
    <cofactor evidence="1">
        <name>K(+)</name>
        <dbReference type="ChEBI" id="CHEBI:29103"/>
    </cofactor>
    <text evidence="1">Binds 1 potassium ion per subunit.</text>
</comment>
<comment type="subunit">
    <text evidence="1">Homodimer. Heterotetramer of two MnmE and two MnmG subunits.</text>
</comment>
<comment type="subcellular location">
    <subcellularLocation>
        <location evidence="1">Cytoplasm</location>
    </subcellularLocation>
</comment>
<comment type="similarity">
    <text evidence="1">Belongs to the TRAFAC class TrmE-Era-EngA-EngB-Septin-like GTPase superfamily. TrmE GTPase family.</text>
</comment>
<organism>
    <name type="scientific">Bacillus licheniformis (strain ATCC 14580 / DSM 13 / JCM 2505 / CCUG 7422 / NBRC 12200 / NCIMB 9375 / NCTC 10341 / NRRL NRS-1264 / Gibson 46)</name>
    <dbReference type="NCBI Taxonomy" id="279010"/>
    <lineage>
        <taxon>Bacteria</taxon>
        <taxon>Bacillati</taxon>
        <taxon>Bacillota</taxon>
        <taxon>Bacilli</taxon>
        <taxon>Bacillales</taxon>
        <taxon>Bacillaceae</taxon>
        <taxon>Bacillus</taxon>
    </lineage>
</organism>
<keyword id="KW-0963">Cytoplasm</keyword>
<keyword id="KW-0342">GTP-binding</keyword>
<keyword id="KW-0378">Hydrolase</keyword>
<keyword id="KW-0460">Magnesium</keyword>
<keyword id="KW-0479">Metal-binding</keyword>
<keyword id="KW-0547">Nucleotide-binding</keyword>
<keyword id="KW-0630">Potassium</keyword>
<keyword id="KW-1185">Reference proteome</keyword>
<keyword id="KW-0819">tRNA processing</keyword>
<protein>
    <recommendedName>
        <fullName evidence="1">tRNA modification GTPase MnmE</fullName>
        <ecNumber evidence="1">3.6.-.-</ecNumber>
    </recommendedName>
</protein>